<evidence type="ECO:0000250" key="1"/>
<evidence type="ECO:0000255" key="2">
    <source>
        <dbReference type="PROSITE-ProRule" id="PRU01058"/>
    </source>
</evidence>
<evidence type="ECO:0000256" key="3">
    <source>
        <dbReference type="SAM" id="MobiDB-lite"/>
    </source>
</evidence>
<evidence type="ECO:0000269" key="4">
    <source>
    </source>
</evidence>
<evidence type="ECO:0000269" key="5">
    <source>
    </source>
</evidence>
<evidence type="ECO:0000305" key="6"/>
<evidence type="ECO:0007744" key="7">
    <source>
    </source>
</evidence>
<evidence type="ECO:0007829" key="8">
    <source>
        <dbReference type="PDB" id="8CSP"/>
    </source>
</evidence>
<dbReference type="EMBL" id="AK098215">
    <property type="protein sequence ID" value="BAC05262.1"/>
    <property type="status" value="ALT_INIT"/>
    <property type="molecule type" value="mRNA"/>
</dbReference>
<dbReference type="EMBL" id="AK074953">
    <property type="protein sequence ID" value="BAC11311.1"/>
    <property type="molecule type" value="mRNA"/>
</dbReference>
<dbReference type="EMBL" id="BC004894">
    <property type="protein sequence ID" value="AAH04894.1"/>
    <property type="molecule type" value="mRNA"/>
</dbReference>
<dbReference type="CCDS" id="CCDS3510.1"/>
<dbReference type="RefSeq" id="NP_115689.1">
    <property type="nucleotide sequence ID" value="NM_032313.4"/>
</dbReference>
<dbReference type="PDB" id="8CSP">
    <property type="method" value="EM"/>
    <property type="resolution" value="2.66 A"/>
    <property type="chains" value="9=1-698"/>
</dbReference>
<dbReference type="PDBsum" id="8CSP"/>
<dbReference type="EMDB" id="EMD-26966"/>
<dbReference type="SMR" id="Q8NC60"/>
<dbReference type="BioGRID" id="124000">
    <property type="interactions" value="127"/>
</dbReference>
<dbReference type="FunCoup" id="Q8NC60">
    <property type="interactions" value="2367"/>
</dbReference>
<dbReference type="IntAct" id="Q8NC60">
    <property type="interactions" value="79"/>
</dbReference>
<dbReference type="MINT" id="Q8NC60"/>
<dbReference type="STRING" id="9606.ENSP00000264230"/>
<dbReference type="GlyGen" id="Q8NC60">
    <property type="glycosylation" value="1 site"/>
</dbReference>
<dbReference type="iPTMnet" id="Q8NC60"/>
<dbReference type="PhosphoSitePlus" id="Q8NC60"/>
<dbReference type="SwissPalm" id="Q8NC60"/>
<dbReference type="BioMuta" id="NOA1"/>
<dbReference type="DMDM" id="93204549"/>
<dbReference type="jPOST" id="Q8NC60"/>
<dbReference type="MassIVE" id="Q8NC60"/>
<dbReference type="PaxDb" id="9606-ENSP00000264230"/>
<dbReference type="PeptideAtlas" id="Q8NC60"/>
<dbReference type="ProteomicsDB" id="72856"/>
<dbReference type="Pumba" id="Q8NC60"/>
<dbReference type="Antibodypedia" id="44140">
    <property type="antibodies" value="117 antibodies from 23 providers"/>
</dbReference>
<dbReference type="DNASU" id="84273"/>
<dbReference type="Ensembl" id="ENST00000264230.5">
    <property type="protein sequence ID" value="ENSP00000264230.4"/>
    <property type="gene ID" value="ENSG00000084092.7"/>
</dbReference>
<dbReference type="GeneID" id="84273"/>
<dbReference type="KEGG" id="hsa:84273"/>
<dbReference type="MANE-Select" id="ENST00000264230.5">
    <property type="protein sequence ID" value="ENSP00000264230.4"/>
    <property type="RefSeq nucleotide sequence ID" value="NM_032313.4"/>
    <property type="RefSeq protein sequence ID" value="NP_115689.1"/>
</dbReference>
<dbReference type="UCSC" id="uc003hck.4">
    <property type="organism name" value="human"/>
</dbReference>
<dbReference type="AGR" id="HGNC:28473"/>
<dbReference type="CTD" id="84273"/>
<dbReference type="DisGeNET" id="84273"/>
<dbReference type="GeneCards" id="NOA1"/>
<dbReference type="HGNC" id="HGNC:28473">
    <property type="gene designation" value="NOA1"/>
</dbReference>
<dbReference type="HPA" id="ENSG00000084092">
    <property type="expression patterns" value="Low tissue specificity"/>
</dbReference>
<dbReference type="MIM" id="614919">
    <property type="type" value="gene"/>
</dbReference>
<dbReference type="neXtProt" id="NX_Q8NC60"/>
<dbReference type="OpenTargets" id="ENSG00000084092"/>
<dbReference type="PharmGKB" id="PA134878853"/>
<dbReference type="VEuPathDB" id="HostDB:ENSG00000084092"/>
<dbReference type="eggNOG" id="KOG1249">
    <property type="taxonomic scope" value="Eukaryota"/>
</dbReference>
<dbReference type="GeneTree" id="ENSGT00390000001695"/>
<dbReference type="HOGENOM" id="CLU_014195_2_0_1"/>
<dbReference type="InParanoid" id="Q8NC60"/>
<dbReference type="OMA" id="LGCTNVG"/>
<dbReference type="OrthoDB" id="1696305at2759"/>
<dbReference type="PAN-GO" id="Q8NC60">
    <property type="GO annotations" value="3 GO annotations based on evolutionary models"/>
</dbReference>
<dbReference type="PhylomeDB" id="Q8NC60"/>
<dbReference type="TreeFam" id="TF314460"/>
<dbReference type="PathwayCommons" id="Q8NC60"/>
<dbReference type="SignaLink" id="Q8NC60"/>
<dbReference type="BioGRID-ORCS" id="84273">
    <property type="hits" value="90 hits in 1156 CRISPR screens"/>
</dbReference>
<dbReference type="CD-CODE" id="5965E019">
    <property type="entry name" value="mtRNA granule"/>
</dbReference>
<dbReference type="ChiTaRS" id="NOA1">
    <property type="organism name" value="human"/>
</dbReference>
<dbReference type="GenomeRNAi" id="84273"/>
<dbReference type="Pharos" id="Q8NC60">
    <property type="development level" value="Tbio"/>
</dbReference>
<dbReference type="PRO" id="PR:Q8NC60"/>
<dbReference type="Proteomes" id="UP000005640">
    <property type="component" value="Chromosome 4"/>
</dbReference>
<dbReference type="RNAct" id="Q8NC60">
    <property type="molecule type" value="protein"/>
</dbReference>
<dbReference type="Bgee" id="ENSG00000084092">
    <property type="expression patterns" value="Expressed in tibialis anterior and 174 other cell types or tissues"/>
</dbReference>
<dbReference type="GO" id="GO:0005743">
    <property type="term" value="C:mitochondrial inner membrane"/>
    <property type="evidence" value="ECO:0007669"/>
    <property type="project" value="UniProtKB-SubCell"/>
</dbReference>
<dbReference type="GO" id="GO:0005739">
    <property type="term" value="C:mitochondrion"/>
    <property type="evidence" value="ECO:0000314"/>
    <property type="project" value="HPA"/>
</dbReference>
<dbReference type="GO" id="GO:0005525">
    <property type="term" value="F:GTP binding"/>
    <property type="evidence" value="ECO:0000314"/>
    <property type="project" value="UniProtKB"/>
</dbReference>
<dbReference type="GO" id="GO:0003723">
    <property type="term" value="F:RNA binding"/>
    <property type="evidence" value="ECO:0007005"/>
    <property type="project" value="UniProtKB"/>
</dbReference>
<dbReference type="GO" id="GO:0006915">
    <property type="term" value="P:apoptotic process"/>
    <property type="evidence" value="ECO:0007669"/>
    <property type="project" value="UniProtKB-KW"/>
</dbReference>
<dbReference type="GO" id="GO:0061668">
    <property type="term" value="P:mitochondrial ribosome assembly"/>
    <property type="evidence" value="ECO:0000250"/>
    <property type="project" value="UniProtKB"/>
</dbReference>
<dbReference type="GO" id="GO:0007005">
    <property type="term" value="P:mitochondrion organization"/>
    <property type="evidence" value="ECO:0000315"/>
    <property type="project" value="UniProtKB"/>
</dbReference>
<dbReference type="CDD" id="cd01855">
    <property type="entry name" value="YqeH"/>
    <property type="match status" value="1"/>
</dbReference>
<dbReference type="Gene3D" id="3.40.50.300">
    <property type="entry name" value="P-loop containing nucleotide triphosphate hydrolases"/>
    <property type="match status" value="1"/>
</dbReference>
<dbReference type="InterPro" id="IPR030378">
    <property type="entry name" value="G_CP_dom"/>
</dbReference>
<dbReference type="InterPro" id="IPR006073">
    <property type="entry name" value="GTP-bd"/>
</dbReference>
<dbReference type="InterPro" id="IPR052807">
    <property type="entry name" value="Mito_transl_resp_regulator"/>
</dbReference>
<dbReference type="InterPro" id="IPR048422">
    <property type="entry name" value="NOA1/YqeH-like_C"/>
</dbReference>
<dbReference type="InterPro" id="IPR027417">
    <property type="entry name" value="P-loop_NTPase"/>
</dbReference>
<dbReference type="PANTHER" id="PTHR46406">
    <property type="entry name" value="NITRIC OXIDE-ASSOCIATED PROTEIN 1"/>
    <property type="match status" value="1"/>
</dbReference>
<dbReference type="PANTHER" id="PTHR46406:SF1">
    <property type="entry name" value="NITRIC OXIDE-ASSOCIATED PROTEIN 1"/>
    <property type="match status" value="1"/>
</dbReference>
<dbReference type="Pfam" id="PF01926">
    <property type="entry name" value="MMR_HSR1"/>
    <property type="match status" value="1"/>
</dbReference>
<dbReference type="Pfam" id="PF21516">
    <property type="entry name" value="YqeH-like_C"/>
    <property type="match status" value="1"/>
</dbReference>
<dbReference type="SUPFAM" id="SSF52540">
    <property type="entry name" value="P-loop containing nucleoside triphosphate hydrolases"/>
    <property type="match status" value="1"/>
</dbReference>
<dbReference type="PROSITE" id="PS51721">
    <property type="entry name" value="G_CP"/>
    <property type="match status" value="1"/>
</dbReference>
<reference key="1">
    <citation type="journal article" date="2004" name="Nat. Genet.">
        <title>Complete sequencing and characterization of 21,243 full-length human cDNAs.</title>
        <authorList>
            <person name="Ota T."/>
            <person name="Suzuki Y."/>
            <person name="Nishikawa T."/>
            <person name="Otsuki T."/>
            <person name="Sugiyama T."/>
            <person name="Irie R."/>
            <person name="Wakamatsu A."/>
            <person name="Hayashi K."/>
            <person name="Sato H."/>
            <person name="Nagai K."/>
            <person name="Kimura K."/>
            <person name="Makita H."/>
            <person name="Sekine M."/>
            <person name="Obayashi M."/>
            <person name="Nishi T."/>
            <person name="Shibahara T."/>
            <person name="Tanaka T."/>
            <person name="Ishii S."/>
            <person name="Yamamoto J."/>
            <person name="Saito K."/>
            <person name="Kawai Y."/>
            <person name="Isono Y."/>
            <person name="Nakamura Y."/>
            <person name="Nagahari K."/>
            <person name="Murakami K."/>
            <person name="Yasuda T."/>
            <person name="Iwayanagi T."/>
            <person name="Wagatsuma M."/>
            <person name="Shiratori A."/>
            <person name="Sudo H."/>
            <person name="Hosoiri T."/>
            <person name="Kaku Y."/>
            <person name="Kodaira H."/>
            <person name="Kondo H."/>
            <person name="Sugawara M."/>
            <person name="Takahashi M."/>
            <person name="Kanda K."/>
            <person name="Yokoi T."/>
            <person name="Furuya T."/>
            <person name="Kikkawa E."/>
            <person name="Omura Y."/>
            <person name="Abe K."/>
            <person name="Kamihara K."/>
            <person name="Katsuta N."/>
            <person name="Sato K."/>
            <person name="Tanikawa M."/>
            <person name="Yamazaki M."/>
            <person name="Ninomiya K."/>
            <person name="Ishibashi T."/>
            <person name="Yamashita H."/>
            <person name="Murakawa K."/>
            <person name="Fujimori K."/>
            <person name="Tanai H."/>
            <person name="Kimata M."/>
            <person name="Watanabe M."/>
            <person name="Hiraoka S."/>
            <person name="Chiba Y."/>
            <person name="Ishida S."/>
            <person name="Ono Y."/>
            <person name="Takiguchi S."/>
            <person name="Watanabe S."/>
            <person name="Yosida M."/>
            <person name="Hotuta T."/>
            <person name="Kusano J."/>
            <person name="Kanehori K."/>
            <person name="Takahashi-Fujii A."/>
            <person name="Hara H."/>
            <person name="Tanase T.-O."/>
            <person name="Nomura Y."/>
            <person name="Togiya S."/>
            <person name="Komai F."/>
            <person name="Hara R."/>
            <person name="Takeuchi K."/>
            <person name="Arita M."/>
            <person name="Imose N."/>
            <person name="Musashino K."/>
            <person name="Yuuki H."/>
            <person name="Oshima A."/>
            <person name="Sasaki N."/>
            <person name="Aotsuka S."/>
            <person name="Yoshikawa Y."/>
            <person name="Matsunawa H."/>
            <person name="Ichihara T."/>
            <person name="Shiohata N."/>
            <person name="Sano S."/>
            <person name="Moriya S."/>
            <person name="Momiyama H."/>
            <person name="Satoh N."/>
            <person name="Takami S."/>
            <person name="Terashima Y."/>
            <person name="Suzuki O."/>
            <person name="Nakagawa S."/>
            <person name="Senoh A."/>
            <person name="Mizoguchi H."/>
            <person name="Goto Y."/>
            <person name="Shimizu F."/>
            <person name="Wakebe H."/>
            <person name="Hishigaki H."/>
            <person name="Watanabe T."/>
            <person name="Sugiyama A."/>
            <person name="Takemoto M."/>
            <person name="Kawakami B."/>
            <person name="Yamazaki M."/>
            <person name="Watanabe K."/>
            <person name="Kumagai A."/>
            <person name="Itakura S."/>
            <person name="Fukuzumi Y."/>
            <person name="Fujimori Y."/>
            <person name="Komiyama M."/>
            <person name="Tashiro H."/>
            <person name="Tanigami A."/>
            <person name="Fujiwara T."/>
            <person name="Ono T."/>
            <person name="Yamada K."/>
            <person name="Fujii Y."/>
            <person name="Ozaki K."/>
            <person name="Hirao M."/>
            <person name="Ohmori Y."/>
            <person name="Kawabata A."/>
            <person name="Hikiji T."/>
            <person name="Kobatake N."/>
            <person name="Inagaki H."/>
            <person name="Ikema Y."/>
            <person name="Okamoto S."/>
            <person name="Okitani R."/>
            <person name="Kawakami T."/>
            <person name="Noguchi S."/>
            <person name="Itoh T."/>
            <person name="Shigeta K."/>
            <person name="Senba T."/>
            <person name="Matsumura K."/>
            <person name="Nakajima Y."/>
            <person name="Mizuno T."/>
            <person name="Morinaga M."/>
            <person name="Sasaki M."/>
            <person name="Togashi T."/>
            <person name="Oyama M."/>
            <person name="Hata H."/>
            <person name="Watanabe M."/>
            <person name="Komatsu T."/>
            <person name="Mizushima-Sugano J."/>
            <person name="Satoh T."/>
            <person name="Shirai Y."/>
            <person name="Takahashi Y."/>
            <person name="Nakagawa K."/>
            <person name="Okumura K."/>
            <person name="Nagase T."/>
            <person name="Nomura N."/>
            <person name="Kikuchi H."/>
            <person name="Masuho Y."/>
            <person name="Yamashita R."/>
            <person name="Nakai K."/>
            <person name="Yada T."/>
            <person name="Nakamura Y."/>
            <person name="Ohara O."/>
            <person name="Isogai T."/>
            <person name="Sugano S."/>
        </authorList>
    </citation>
    <scope>NUCLEOTIDE SEQUENCE [LARGE SCALE MRNA]</scope>
    <source>
        <tissue>Uterus</tissue>
    </source>
</reference>
<reference key="2">
    <citation type="journal article" date="2004" name="Genome Res.">
        <title>The status, quality, and expansion of the NIH full-length cDNA project: the Mammalian Gene Collection (MGC).</title>
        <authorList>
            <consortium name="The MGC Project Team"/>
        </authorList>
    </citation>
    <scope>NUCLEOTIDE SEQUENCE [LARGE SCALE MRNA]</scope>
    <source>
        <tissue>Placenta</tissue>
    </source>
</reference>
<reference key="3">
    <citation type="journal article" date="2009" name="J. Biol. Chem.">
        <title>hNOA1 interacts with complex I and DAP3 and regulates mitochondrial respiration and apoptosis.</title>
        <authorList>
            <person name="Tang T."/>
            <person name="Zheng B."/>
            <person name="Chen S.H."/>
            <person name="Murphy A.N."/>
            <person name="Kudlicka K."/>
            <person name="Zhou H."/>
            <person name="Farquhar M.G."/>
        </authorList>
    </citation>
    <scope>FUNCTION</scope>
    <scope>INTERACTION WITH MITOCHONDRIAL COMPLEX I; MRPL12; MRPS27 AND DAP3</scope>
    <scope>GTP-BINDING</scope>
    <scope>SUBCELLULAR LOCATION</scope>
</reference>
<reference key="4">
    <citation type="journal article" date="2009" name="Sci. Signal.">
        <title>Quantitative phosphoproteomic analysis of T cell receptor signaling reveals system-wide modulation of protein-protein interactions.</title>
        <authorList>
            <person name="Mayya V."/>
            <person name="Lundgren D.H."/>
            <person name="Hwang S.-I."/>
            <person name="Rezaul K."/>
            <person name="Wu L."/>
            <person name="Eng J.K."/>
            <person name="Rodionov V."/>
            <person name="Han D.K."/>
        </authorList>
    </citation>
    <scope>PHOSPHORYLATION [LARGE SCALE ANALYSIS] AT TYR-77</scope>
    <scope>IDENTIFICATION BY MASS SPECTROMETRY [LARGE SCALE ANALYSIS]</scope>
    <source>
        <tissue>Leukemic T-cell</tissue>
    </source>
</reference>
<reference key="5">
    <citation type="journal article" date="2011" name="BMC Syst. Biol.">
        <title>Initial characterization of the human central proteome.</title>
        <authorList>
            <person name="Burkard T.R."/>
            <person name="Planyavsky M."/>
            <person name="Kaupe I."/>
            <person name="Breitwieser F.P."/>
            <person name="Buerckstuemmer T."/>
            <person name="Bennett K.L."/>
            <person name="Superti-Furga G."/>
            <person name="Colinge J."/>
        </authorList>
    </citation>
    <scope>IDENTIFICATION BY MASS SPECTROMETRY [LARGE SCALE ANALYSIS]</scope>
</reference>
<reference key="6">
    <citation type="journal article" date="2013" name="J. Proteome Res.">
        <title>Toward a comprehensive characterization of a human cancer cell phosphoproteome.</title>
        <authorList>
            <person name="Zhou H."/>
            <person name="Di Palma S."/>
            <person name="Preisinger C."/>
            <person name="Peng M."/>
            <person name="Polat A.N."/>
            <person name="Heck A.J."/>
            <person name="Mohammed S."/>
        </authorList>
    </citation>
    <scope>IDENTIFICATION BY MASS SPECTROMETRY [LARGE SCALE ANALYSIS]</scope>
    <source>
        <tissue>Erythroleukemia</tissue>
    </source>
</reference>
<reference key="7">
    <citation type="journal article" date="2006" name="Science">
        <title>The consensus coding sequences of human breast and colorectal cancers.</title>
        <authorList>
            <person name="Sjoeblom T."/>
            <person name="Jones S."/>
            <person name="Wood L.D."/>
            <person name="Parsons D.W."/>
            <person name="Lin J."/>
            <person name="Barber T.D."/>
            <person name="Mandelker D."/>
            <person name="Leary R.J."/>
            <person name="Ptak J."/>
            <person name="Silliman N."/>
            <person name="Szabo S."/>
            <person name="Buckhaults P."/>
            <person name="Farrell C."/>
            <person name="Meeh P."/>
            <person name="Markowitz S.D."/>
            <person name="Willis J."/>
            <person name="Dawson D."/>
            <person name="Willson J.K.V."/>
            <person name="Gazdar A.F."/>
            <person name="Hartigan J."/>
            <person name="Wu L."/>
            <person name="Liu C."/>
            <person name="Parmigiani G."/>
            <person name="Park B.H."/>
            <person name="Bachman K.E."/>
            <person name="Papadopoulos N."/>
            <person name="Vogelstein B."/>
            <person name="Kinzler K.W."/>
            <person name="Velculescu V.E."/>
        </authorList>
    </citation>
    <scope>VARIANT [LARGE SCALE ANALYSIS] ARG-579</scope>
</reference>
<organism>
    <name type="scientific">Homo sapiens</name>
    <name type="common">Human</name>
    <dbReference type="NCBI Taxonomy" id="9606"/>
    <lineage>
        <taxon>Eukaryota</taxon>
        <taxon>Metazoa</taxon>
        <taxon>Chordata</taxon>
        <taxon>Craniata</taxon>
        <taxon>Vertebrata</taxon>
        <taxon>Euteleostomi</taxon>
        <taxon>Mammalia</taxon>
        <taxon>Eutheria</taxon>
        <taxon>Euarchontoglires</taxon>
        <taxon>Primates</taxon>
        <taxon>Haplorrhini</taxon>
        <taxon>Catarrhini</taxon>
        <taxon>Hominidae</taxon>
        <taxon>Homo</taxon>
    </lineage>
</organism>
<proteinExistence type="evidence at protein level"/>
<comment type="function">
    <text evidence="5">Involved in regulation of mitochondrial protein translation and respiration. Plays a role in mitochondria-mediated cell death. May act as a scaffolding protein or stabilizer of respiratory chain supercomplexes. Binds GTP.</text>
</comment>
<comment type="subunit">
    <text evidence="1 5">Homodimer or multimer (By similarity). Interacts with mitochondrial complex I, DAP3, MRPL12 and MRPS27.</text>
</comment>
<comment type="interaction">
    <interactant intactId="EBI-717871">
        <id>Q8NC60</id>
    </interactant>
    <interactant intactId="EBI-355912">
        <id>P51398</id>
        <label>DAP3</label>
    </interactant>
    <organismsDiffer>false</organismsDiffer>
    <experiments>5</experiments>
</comment>
<comment type="interaction">
    <interactant intactId="EBI-717871">
        <id>Q8NC60</id>
    </interactant>
    <interactant intactId="EBI-1045087">
        <id>Q16795</id>
        <label>NDUFA9</label>
    </interactant>
    <organismsDiffer>false</organismsDiffer>
    <experiments>2</experiments>
</comment>
<comment type="subcellular location">
    <subcellularLocation>
        <location evidence="5">Mitochondrion inner membrane</location>
        <topology evidence="5">Peripheral membrane protein</topology>
        <orientation evidence="5">Matrix side</orientation>
    </subcellularLocation>
</comment>
<comment type="similarity">
    <text evidence="2">Belongs to the TRAFAC class YlqF/YawG GTPase family. NOA1 subfamily.</text>
</comment>
<comment type="sequence caution" evidence="6">
    <conflict type="erroneous initiation">
        <sequence resource="EMBL-CDS" id="BAC05262"/>
    </conflict>
    <text>Truncated N-terminus.</text>
</comment>
<accession>Q8NC60</accession>
<accession>Q8N7L6</accession>
<accession>Q9BSQ9</accession>
<name>NOA1_HUMAN</name>
<sequence>MLPARLPFRLLSLFLRGSAPTAARHGLREPLLERRCAAASSFQHSSSLGRELPYDPVDTEGFGEGGDMQERFLFPEYILDPEPQPTREKQLQELQQQQEEEERQRQQRREERRQQNLRARSREHPVVGHPDPALPPSGVNCSGCGAELHCQDAGVPGYLPREKFLRTAEADGGLARTVCQRCWLLSHHRRALRLQVSREQYLELVSAALRRPGPSLVLYMVDLLDLPDALLPDLPALVGPKQLIVLGNKVDLLPQDAPGYRQRLRERLWEDCARAGLLLAPGHQGPQRPVKDEPQDGENPNPPNWSRTVVRDVRLISAKTGYGVEELISALQRSWRYRGDVYLVGATNAGKSTLFNTLLESDYCTAKGSEAIDRATISPWPGTTLNLLKFPICNPTPYRMFKRHQRLKKDSTQAEEDLSEQEQNQLNVLKKHGYVVGRVGRTFLYSEEQKDNIPFEFDADSLAFDMENDPVMGTHKSTKQVELTAQDVKDAHWFYDTPGITKENCILNLLTEKEVNIVLPTQSIVPRTFVLKPGMVLFLGAIGRIDFLQGNQSAWFTVVASNILPVHITSLDRADALYQKHAGHTLLQIPMGGKERMAGFPPLVAEDIMLKEGLGASEAVADIKFSSAGWVSVTPNFKDRLHLRGYTPEGTVLTVRPPLLPYIVNIKGQRIKKSVAYKTKKPPSLMYNVRKKKGKINV</sequence>
<keyword id="KW-0002">3D-structure</keyword>
<keyword id="KW-0053">Apoptosis</keyword>
<keyword id="KW-0342">GTP-binding</keyword>
<keyword id="KW-0472">Membrane</keyword>
<keyword id="KW-0496">Mitochondrion</keyword>
<keyword id="KW-0999">Mitochondrion inner membrane</keyword>
<keyword id="KW-0547">Nucleotide-binding</keyword>
<keyword id="KW-0597">Phosphoprotein</keyword>
<keyword id="KW-1267">Proteomics identification</keyword>
<keyword id="KW-1185">Reference proteome</keyword>
<protein>
    <recommendedName>
        <fullName>Nitric oxide-associated protein 1</fullName>
    </recommendedName>
</protein>
<gene>
    <name type="primary">NOA1</name>
    <name type="synonym">C4orf14</name>
</gene>
<feature type="chain" id="PRO_0000232510" description="Nitric oxide-associated protein 1">
    <location>
        <begin position="1"/>
        <end position="698"/>
    </location>
</feature>
<feature type="domain" description="CP-type G" evidence="2">
    <location>
        <begin position="202"/>
        <end position="503"/>
    </location>
</feature>
<feature type="region of interest" description="Disordered" evidence="3">
    <location>
        <begin position="42"/>
        <end position="66"/>
    </location>
</feature>
<feature type="region of interest" description="Disordered" evidence="3">
    <location>
        <begin position="80"/>
        <end position="134"/>
    </location>
</feature>
<feature type="region of interest" description="Disordered" evidence="3">
    <location>
        <begin position="279"/>
        <end position="306"/>
    </location>
</feature>
<feature type="compositionally biased region" description="Basic and acidic residues" evidence="3">
    <location>
        <begin position="102"/>
        <end position="126"/>
    </location>
</feature>
<feature type="modified residue" description="Phosphotyrosine" evidence="7">
    <location>
        <position position="77"/>
    </location>
</feature>
<feature type="sequence variant" id="VAR_025941" description="In dbSNP:rs3733306.">
    <original>A</original>
    <variation>S</variation>
    <location>
        <position position="153"/>
    </location>
</feature>
<feature type="sequence variant" id="VAR_025942" description="In dbSNP:rs11553077.">
    <original>K</original>
    <variation>R</variation>
    <location>
        <position position="450"/>
    </location>
</feature>
<feature type="sequence variant" id="VAR_035500" description="In a breast cancer sample; somatic mutation." evidence="4">
    <original>Q</original>
    <variation>R</variation>
    <location>
        <position position="579"/>
    </location>
</feature>
<feature type="sequence conflict" description="In Ref. 1; BAC05262." evidence="6" ref="1">
    <original>EERQRQQRR</original>
    <variation>Q</variation>
    <location>
        <begin position="101"/>
        <end position="109"/>
    </location>
</feature>
<feature type="sequence conflict" description="In Ref. 1; BAC11311." evidence="6" ref="1">
    <original>N</original>
    <variation>S</variation>
    <location>
        <position position="140"/>
    </location>
</feature>
<feature type="sequence conflict" description="In Ref. 1; BAC05262." evidence="6" ref="1">
    <original>Y</original>
    <variation>C</variation>
    <location>
        <position position="322"/>
    </location>
</feature>
<feature type="helix" evidence="8">
    <location>
        <begin position="75"/>
        <end position="77"/>
    </location>
</feature>
<feature type="helix" evidence="8">
    <location>
        <begin position="87"/>
        <end position="114"/>
    </location>
</feature>
<feature type="helix" evidence="8">
    <location>
        <begin position="180"/>
        <end position="192"/>
    </location>
</feature>
<feature type="helix" evidence="8">
    <location>
        <begin position="198"/>
        <end position="204"/>
    </location>
</feature>
<feature type="helix" evidence="8">
    <location>
        <begin position="206"/>
        <end position="209"/>
    </location>
</feature>
<feature type="strand" evidence="8">
    <location>
        <begin position="211"/>
        <end position="225"/>
    </location>
</feature>
<feature type="helix" evidence="8">
    <location>
        <begin position="231"/>
        <end position="233"/>
    </location>
</feature>
<feature type="helix" evidence="8">
    <location>
        <begin position="234"/>
        <end position="237"/>
    </location>
</feature>
<feature type="strand" evidence="8">
    <location>
        <begin position="240"/>
        <end position="248"/>
    </location>
</feature>
<feature type="helix" evidence="8">
    <location>
        <begin position="260"/>
        <end position="274"/>
    </location>
</feature>
<feature type="strand" evidence="8">
    <location>
        <begin position="309"/>
        <end position="315"/>
    </location>
</feature>
<feature type="turn" evidence="8">
    <location>
        <begin position="318"/>
        <end position="321"/>
    </location>
</feature>
<feature type="helix" evidence="8">
    <location>
        <begin position="324"/>
        <end position="331"/>
    </location>
</feature>
<feature type="strand" evidence="8">
    <location>
        <begin position="335"/>
        <end position="337"/>
    </location>
</feature>
<feature type="strand" evidence="8">
    <location>
        <begin position="339"/>
        <end position="343"/>
    </location>
</feature>
<feature type="helix" evidence="8">
    <location>
        <begin position="347"/>
        <end position="349"/>
    </location>
</feature>
<feature type="helix" evidence="8">
    <location>
        <begin position="351"/>
        <end position="359"/>
    </location>
</feature>
<feature type="strand" evidence="8">
    <location>
        <begin position="367"/>
        <end position="370"/>
    </location>
</feature>
<feature type="helix" evidence="8">
    <location>
        <begin position="371"/>
        <end position="374"/>
    </location>
</feature>
<feature type="strand" evidence="8">
    <location>
        <begin position="375"/>
        <end position="379"/>
    </location>
</feature>
<feature type="strand" evidence="8">
    <location>
        <begin position="386"/>
        <end position="389"/>
    </location>
</feature>
<feature type="helix" evidence="8">
    <location>
        <begin position="397"/>
        <end position="400"/>
    </location>
</feature>
<feature type="strand" evidence="8">
    <location>
        <begin position="493"/>
        <end position="496"/>
    </location>
</feature>
<feature type="helix" evidence="8">
    <location>
        <begin position="506"/>
        <end position="509"/>
    </location>
</feature>
<feature type="helix" evidence="8">
    <location>
        <begin position="512"/>
        <end position="518"/>
    </location>
</feature>
<feature type="strand" evidence="8">
    <location>
        <begin position="527"/>
        <end position="531"/>
    </location>
</feature>
<feature type="strand" evidence="8">
    <location>
        <begin position="535"/>
        <end position="539"/>
    </location>
</feature>
<feature type="turn" evidence="8">
    <location>
        <begin position="540"/>
        <end position="542"/>
    </location>
</feature>
<feature type="strand" evidence="8">
    <location>
        <begin position="543"/>
        <end position="549"/>
    </location>
</feature>
<feature type="strand" evidence="8">
    <location>
        <begin position="554"/>
        <end position="560"/>
    </location>
</feature>
<feature type="strand" evidence="8">
    <location>
        <begin position="566"/>
        <end position="570"/>
    </location>
</feature>
<feature type="helix" evidence="8">
    <location>
        <begin position="571"/>
        <end position="581"/>
    </location>
</feature>
<feature type="turn" evidence="8">
    <location>
        <begin position="584"/>
        <end position="587"/>
    </location>
</feature>
<feature type="helix" evidence="8">
    <location>
        <begin position="593"/>
        <end position="599"/>
    </location>
</feature>
<feature type="strand" evidence="8">
    <location>
        <begin position="603"/>
        <end position="609"/>
    </location>
</feature>
<feature type="strand" evidence="8">
    <location>
        <begin position="616"/>
        <end position="618"/>
    </location>
</feature>
<feature type="strand" evidence="8">
    <location>
        <begin position="620"/>
        <end position="624"/>
    </location>
</feature>
<feature type="strand" evidence="8">
    <location>
        <begin position="628"/>
        <end position="635"/>
    </location>
</feature>
<feature type="strand" evidence="8">
    <location>
        <begin position="642"/>
        <end position="651"/>
    </location>
</feature>
<feature type="strand" evidence="8">
    <location>
        <begin position="654"/>
        <end position="657"/>
    </location>
</feature>
<feature type="strand" evidence="8">
    <location>
        <begin position="664"/>
        <end position="666"/>
    </location>
</feature>
<feature type="strand" evidence="8">
    <location>
        <begin position="674"/>
        <end position="677"/>
    </location>
</feature>